<comment type="function">
    <text evidence="1 2 3 4 5 6">DNA repair enzyme involved in the repair of deaminated bases. Selectively cleaves double-stranded DNA at the second phosphodiester bond 3' to a deoxyinosine leaving behind the intact lesion on the nicked DNA. Has a wide substrate spectrum. In addition to deoxyinosine-containing DNA, the enzyme cleaves DNA containing urea residues, AP sites, base mismatches, insertion/deletion mismatches, flaps, and pseudo-Y structures. Participates in the excision repair of hypoxanthine and xanthine (deaminated adenine and guanine) in DNA. It thereby reduces the mutagenic effects of nitrous acid by attacking lesions caused by nitrosative deamination. Also active on inosines in single- and double-stranded RNA. May cleave tRNA(Arg2), which contains inosine at the wobble position.</text>
</comment>
<comment type="catalytic activity">
    <reaction evidence="1 4 5 6">
        <text>Endonucleolytic cleavage at apurinic or apyrimidinic sites to products with a 5'-phosphate.</text>
        <dbReference type="EC" id="3.1.21.7"/>
    </reaction>
</comment>
<comment type="cofactor">
    <cofactor evidence="1 5 6">
        <name>Mg(2+)</name>
        <dbReference type="ChEBI" id="CHEBI:18420"/>
    </cofactor>
</comment>
<comment type="biophysicochemical properties">
    <phDependence>
        <text evidence="5 6">Optimum pH is 7.0-7.5.</text>
    </phDependence>
</comment>
<comment type="subunit">
    <text evidence="5">Monomer.</text>
</comment>
<comment type="interaction">
    <interactant intactId="EBI-551698">
        <id>P68739</id>
    </interactant>
    <interactant intactId="EBI-555781">
        <id>P00914</id>
        <label>phrB</label>
    </interactant>
    <organismsDiffer>false</organismsDiffer>
    <experiments>2</experiments>
</comment>
<comment type="subcellular location">
    <subcellularLocation>
        <location>Cytoplasm</location>
    </subcellularLocation>
</comment>
<comment type="similarity">
    <text evidence="1">Belongs to the endonuclease V family.</text>
</comment>
<comment type="sequence caution" evidence="7">
    <conflict type="erroneous initiation">
        <sequence resource="EMBL-CDS" id="AAC43096"/>
    </conflict>
    <text>Extended N-terminus.</text>
</comment>
<evidence type="ECO:0000255" key="1">
    <source>
        <dbReference type="HAMAP-Rule" id="MF_00801"/>
    </source>
</evidence>
<evidence type="ECO:0000269" key="2">
    <source>
    </source>
</evidence>
<evidence type="ECO:0000269" key="3">
    <source>
    </source>
</evidence>
<evidence type="ECO:0000269" key="4">
    <source>
    </source>
</evidence>
<evidence type="ECO:0000269" key="5">
    <source>
    </source>
</evidence>
<evidence type="ECO:0000269" key="6">
    <source>
    </source>
</evidence>
<evidence type="ECO:0000305" key="7"/>
<dbReference type="EC" id="3.1.21.7" evidence="1"/>
<dbReference type="EMBL" id="U00006">
    <property type="protein sequence ID" value="AAC43096.1"/>
    <property type="status" value="ALT_INIT"/>
    <property type="molecule type" value="Genomic_DNA"/>
</dbReference>
<dbReference type="EMBL" id="U00096">
    <property type="protein sequence ID" value="AAC76972.2"/>
    <property type="molecule type" value="Genomic_DNA"/>
</dbReference>
<dbReference type="EMBL" id="AP009048">
    <property type="protein sequence ID" value="BAE77321.1"/>
    <property type="molecule type" value="Genomic_DNA"/>
</dbReference>
<dbReference type="PIR" id="A65207">
    <property type="entry name" value="A65207"/>
</dbReference>
<dbReference type="RefSeq" id="NP_418426.2">
    <property type="nucleotide sequence ID" value="NC_000913.3"/>
</dbReference>
<dbReference type="RefSeq" id="WP_000362388.1">
    <property type="nucleotide sequence ID" value="NZ_STEB01000045.1"/>
</dbReference>
<dbReference type="PDB" id="4XPU">
    <property type="method" value="X-ray"/>
    <property type="resolution" value="2.40 A"/>
    <property type="chains" value="A/B=1-214"/>
</dbReference>
<dbReference type="PDBsum" id="4XPU"/>
<dbReference type="SMR" id="P68739"/>
<dbReference type="BioGRID" id="4263468">
    <property type="interactions" value="115"/>
</dbReference>
<dbReference type="BioGRID" id="852796">
    <property type="interactions" value="1"/>
</dbReference>
<dbReference type="DIP" id="DIP-47986N"/>
<dbReference type="FunCoup" id="P68739">
    <property type="interactions" value="551"/>
</dbReference>
<dbReference type="IntAct" id="P68739">
    <property type="interactions" value="30"/>
</dbReference>
<dbReference type="STRING" id="511145.b3998"/>
<dbReference type="jPOST" id="P68739"/>
<dbReference type="PaxDb" id="511145-b3998"/>
<dbReference type="DNASU" id="948502"/>
<dbReference type="EnsemblBacteria" id="AAC76972">
    <property type="protein sequence ID" value="AAC76972"/>
    <property type="gene ID" value="b3998"/>
</dbReference>
<dbReference type="GeneID" id="75169444"/>
<dbReference type="GeneID" id="948502"/>
<dbReference type="KEGG" id="ecj:JW5547"/>
<dbReference type="KEGG" id="eco:b3998"/>
<dbReference type="KEGG" id="ecoc:C3026_21595"/>
<dbReference type="PATRIC" id="fig|1411691.4.peg.2713"/>
<dbReference type="EchoBASE" id="EB1859"/>
<dbReference type="eggNOG" id="COG1515">
    <property type="taxonomic scope" value="Bacteria"/>
</dbReference>
<dbReference type="HOGENOM" id="CLU_047631_1_0_6"/>
<dbReference type="InParanoid" id="P68739"/>
<dbReference type="OMA" id="NACAHTL"/>
<dbReference type="OrthoDB" id="9790916at2"/>
<dbReference type="PhylomeDB" id="P68739"/>
<dbReference type="BioCyc" id="EcoCyc:EG11915-MONOMER"/>
<dbReference type="BioCyc" id="MetaCyc:EG11915-MONOMER"/>
<dbReference type="BRENDA" id="3.1.21.7">
    <property type="organism ID" value="2026"/>
</dbReference>
<dbReference type="PRO" id="PR:P68739"/>
<dbReference type="Proteomes" id="UP000000625">
    <property type="component" value="Chromosome"/>
</dbReference>
<dbReference type="GO" id="GO:0005829">
    <property type="term" value="C:cytosol"/>
    <property type="evidence" value="ECO:0000305"/>
    <property type="project" value="EcoCyc"/>
</dbReference>
<dbReference type="GO" id="GO:0043737">
    <property type="term" value="F:deoxyribonuclease V activity"/>
    <property type="evidence" value="ECO:0000314"/>
    <property type="project" value="EcoCyc"/>
</dbReference>
<dbReference type="GO" id="GO:0000287">
    <property type="term" value="F:magnesium ion binding"/>
    <property type="evidence" value="ECO:0007669"/>
    <property type="project" value="UniProtKB-UniRule"/>
</dbReference>
<dbReference type="GO" id="GO:0016891">
    <property type="term" value="F:RNA endonuclease activity, producing 5'-phosphomonoesters"/>
    <property type="evidence" value="ECO:0000318"/>
    <property type="project" value="GO_Central"/>
</dbReference>
<dbReference type="GO" id="GO:0003727">
    <property type="term" value="F:single-stranded RNA binding"/>
    <property type="evidence" value="ECO:0000318"/>
    <property type="project" value="GO_Central"/>
</dbReference>
<dbReference type="GO" id="GO:0006281">
    <property type="term" value="P:DNA repair"/>
    <property type="evidence" value="ECO:0000314"/>
    <property type="project" value="EcoCyc"/>
</dbReference>
<dbReference type="CDD" id="cd06559">
    <property type="entry name" value="Endonuclease_V"/>
    <property type="match status" value="1"/>
</dbReference>
<dbReference type="FunFam" id="3.30.2170.10:FF:000001">
    <property type="entry name" value="Endonuclease V"/>
    <property type="match status" value="1"/>
</dbReference>
<dbReference type="Gene3D" id="3.30.2170.10">
    <property type="entry name" value="archaeoglobus fulgidus dsm 4304 superfamily"/>
    <property type="match status" value="1"/>
</dbReference>
<dbReference type="HAMAP" id="MF_00801">
    <property type="entry name" value="Endonuclease_5"/>
    <property type="match status" value="1"/>
</dbReference>
<dbReference type="InterPro" id="IPR007581">
    <property type="entry name" value="Endonuclease-V"/>
</dbReference>
<dbReference type="NCBIfam" id="NF008629">
    <property type="entry name" value="PRK11617.1"/>
    <property type="match status" value="1"/>
</dbReference>
<dbReference type="PANTHER" id="PTHR28511">
    <property type="entry name" value="ENDONUCLEASE V"/>
    <property type="match status" value="1"/>
</dbReference>
<dbReference type="PANTHER" id="PTHR28511:SF1">
    <property type="entry name" value="ENDONUCLEASE V"/>
    <property type="match status" value="1"/>
</dbReference>
<dbReference type="Pfam" id="PF04493">
    <property type="entry name" value="Endonuclease_5"/>
    <property type="match status" value="1"/>
</dbReference>
<name>NFI_ECOLI</name>
<organism>
    <name type="scientific">Escherichia coli (strain K12)</name>
    <dbReference type="NCBI Taxonomy" id="83333"/>
    <lineage>
        <taxon>Bacteria</taxon>
        <taxon>Pseudomonadati</taxon>
        <taxon>Pseudomonadota</taxon>
        <taxon>Gammaproteobacteria</taxon>
        <taxon>Enterobacterales</taxon>
        <taxon>Enterobacteriaceae</taxon>
        <taxon>Escherichia</taxon>
    </lineage>
</organism>
<reference key="1">
    <citation type="journal article" date="1993" name="Nucleic Acids Res.">
        <title>Analysis of the Escherichia coli genome. IV. DNA sequence of the region from 89.2 to 92.8 minutes.</title>
        <authorList>
            <person name="Blattner F.R."/>
            <person name="Burland V.D."/>
            <person name="Plunkett G. III"/>
            <person name="Sofia H.J."/>
            <person name="Daniels D.L."/>
        </authorList>
    </citation>
    <scope>NUCLEOTIDE SEQUENCE [LARGE SCALE GENOMIC DNA]</scope>
    <source>
        <strain>K12 / MG1655 / ATCC 47076</strain>
    </source>
</reference>
<reference key="2">
    <citation type="journal article" date="1997" name="Science">
        <title>The complete genome sequence of Escherichia coli K-12.</title>
        <authorList>
            <person name="Blattner F.R."/>
            <person name="Plunkett G. III"/>
            <person name="Bloch C.A."/>
            <person name="Perna N.T."/>
            <person name="Burland V."/>
            <person name="Riley M."/>
            <person name="Collado-Vides J."/>
            <person name="Glasner J.D."/>
            <person name="Rode C.K."/>
            <person name="Mayhew G.F."/>
            <person name="Gregor J."/>
            <person name="Davis N.W."/>
            <person name="Kirkpatrick H.A."/>
            <person name="Goeden M.A."/>
            <person name="Rose D.J."/>
            <person name="Mau B."/>
            <person name="Shao Y."/>
        </authorList>
    </citation>
    <scope>NUCLEOTIDE SEQUENCE [LARGE SCALE GENOMIC DNA]</scope>
    <source>
        <strain>K12 / MG1655 / ATCC 47076</strain>
    </source>
</reference>
<reference key="3">
    <citation type="journal article" date="2006" name="Mol. Syst. Biol.">
        <title>Highly accurate genome sequences of Escherichia coli K-12 strains MG1655 and W3110.</title>
        <authorList>
            <person name="Hayashi K."/>
            <person name="Morooka N."/>
            <person name="Yamamoto Y."/>
            <person name="Fujita K."/>
            <person name="Isono K."/>
            <person name="Choi S."/>
            <person name="Ohtsubo E."/>
            <person name="Baba T."/>
            <person name="Wanner B.L."/>
            <person name="Mori H."/>
            <person name="Horiuchi T."/>
        </authorList>
    </citation>
    <scope>NUCLEOTIDE SEQUENCE [LARGE SCALE GENOMIC DNA]</scope>
    <source>
        <strain>K12 / W3110 / ATCC 27325 / DSM 5911</strain>
    </source>
</reference>
<reference key="4">
    <citation type="journal article" date="1997" name="J. Bacteriol.">
        <title>nfi, the gene for endonuclease V in Escherichia coli K-12.</title>
        <authorList>
            <person name="Guo G."/>
            <person name="Ding Y."/>
            <person name="Weiss B."/>
        </authorList>
    </citation>
    <scope>PROTEIN SEQUENCE OF 1-11</scope>
    <scope>IDENTIFICATION</scope>
</reference>
<reference key="5">
    <citation type="journal article" date="1980" name="Methods Enzymol.">
        <title>Purification and properties of Escherichia coli endodeoxyribonuclease V.</title>
        <authorList>
            <person name="Demple B."/>
            <person name="Gates F.T."/>
            <person name="Linn S."/>
        </authorList>
    </citation>
    <scope>FUNCTION</scope>
    <scope>CATALYTIC ACTIVITY</scope>
</reference>
<reference key="6">
    <citation type="journal article" date="1994" name="J. Biol. Chem.">
        <title>Purification and characterization of a novel deoxyinosine-specific enzyme, deoxyinosine 3' endonuclease, from Escherichia coli.</title>
        <authorList>
            <person name="Yao M."/>
            <person name="Hatahet Z."/>
            <person name="Melamede R.J."/>
            <person name="Kow Y.W."/>
        </authorList>
    </citation>
    <scope>FUNCTION</scope>
    <scope>CATALYTIC ACTIVITY</scope>
    <scope>COFACTOR</scope>
    <scope>BIOPHYSICOCHEMICAL PROPERTIES</scope>
    <scope>SUBUNIT</scope>
</reference>
<reference key="7">
    <citation type="journal article" date="1997" name="J. Biol. Chem.">
        <title>Further characterization of Escherichia coli endonuclease V. Mechanism of recognition for deoxyinosine, deoxyuridine, and base mismatches in DNA.</title>
        <authorList>
            <person name="Yao M."/>
            <person name="Kow Y.W."/>
        </authorList>
    </citation>
    <scope>FUNCTION</scope>
    <scope>CATALYTIC ACTIVITY</scope>
    <scope>COFACTOR</scope>
    <scope>BIOPHYSICOCHEMICAL PROPERTIES</scope>
</reference>
<reference key="8">
    <citation type="journal article" date="2001" name="Mutat. Res.">
        <title>Endonuclease V of Escherichia coli prevents mutations from nitrosative deamination during nitrate/nitrite respiration.</title>
        <authorList>
            <person name="Weiss B."/>
        </authorList>
    </citation>
    <scope>FUNCTION</scope>
</reference>
<reference key="9">
    <citation type="journal article" date="2013" name="Nat. Commun.">
        <title>Endonuclease V cleaves at inosines in RNA.</title>
        <authorList>
            <person name="Sebastian Vik E."/>
            <person name="Sameen Nawaz M."/>
            <person name="Strom Andersen P."/>
            <person name="Fladeby C."/>
            <person name="Bjoras M."/>
            <person name="Dalhus B."/>
            <person name="Alseth I."/>
        </authorList>
    </citation>
    <scope>FUNCTION IN CLEAVAGE OF RNA</scope>
    <scope>MUTAGENESIS OF ASP-35</scope>
</reference>
<sequence>MDLASLRAQQIELASSVIREDRLDKDPPDLIAGADVGFEQGGEVTRAAMVLLKYPSLELVEYKVARIATTMPYIPGFLSFREYPALLAAWEMLSQKPDLVFVDGHGISHPRRLGVASHFGLLVDVPTIGVAKKRLCGKFEPLSSEPGALAPLMDKGEQLAWVWRSKARCNPLFIATGHRVSVDSALAWVQRCMKGYRLPEPTRWADAVASERPAFVRYTANQP</sequence>
<accession>P68739</accession>
<accession>P32679</accession>
<accession>Q2M8T5</accession>
<feature type="chain" id="PRO_0000159660" description="Endonuclease V">
    <location>
        <begin position="1"/>
        <end position="223"/>
    </location>
</feature>
<feature type="binding site" evidence="1">
    <location>
        <position position="35"/>
    </location>
    <ligand>
        <name>Mg(2+)</name>
        <dbReference type="ChEBI" id="CHEBI:18420"/>
    </ligand>
</feature>
<feature type="binding site" evidence="1">
    <location>
        <position position="103"/>
    </location>
    <ligand>
        <name>Mg(2+)</name>
        <dbReference type="ChEBI" id="CHEBI:18420"/>
    </ligand>
</feature>
<feature type="site" description="Interaction with target DNA" evidence="1">
    <location>
        <position position="73"/>
    </location>
</feature>
<feature type="mutagenesis site" description="Lack of activity on RNA." evidence="3">
    <original>D</original>
    <variation>A</variation>
    <location>
        <position position="35"/>
    </location>
</feature>
<keyword id="KW-0002">3D-structure</keyword>
<keyword id="KW-0963">Cytoplasm</keyword>
<keyword id="KW-0903">Direct protein sequencing</keyword>
<keyword id="KW-0227">DNA damage</keyword>
<keyword id="KW-0234">DNA repair</keyword>
<keyword id="KW-0255">Endonuclease</keyword>
<keyword id="KW-0378">Hydrolase</keyword>
<keyword id="KW-0460">Magnesium</keyword>
<keyword id="KW-0479">Metal-binding</keyword>
<keyword id="KW-0540">Nuclease</keyword>
<keyword id="KW-1185">Reference proteome</keyword>
<gene>
    <name evidence="1" type="primary">nfi</name>
    <name type="synonym">yjaF</name>
    <name type="ordered locus">b3998</name>
    <name type="ordered locus">JW5547</name>
</gene>
<protein>
    <recommendedName>
        <fullName evidence="1">Endonuclease V</fullName>
        <shortName>EndoV</shortName>
        <ecNumber evidence="1">3.1.21.7</ecNumber>
    </recommendedName>
    <alternativeName>
        <fullName evidence="1">Deoxyinosine 3'endonuclease</fullName>
    </alternativeName>
    <alternativeName>
        <fullName evidence="1">Deoxyribonuclease V</fullName>
        <shortName evidence="1">DNase V</shortName>
    </alternativeName>
</protein>
<proteinExistence type="evidence at protein level"/>